<reference key="1">
    <citation type="journal article" date="2009" name="ISME J.">
        <title>The genome sequence of the psychrophilic archaeon, Methanococcoides burtonii: the role of genome evolution in cold adaptation.</title>
        <authorList>
            <person name="Allen M.A."/>
            <person name="Lauro F.M."/>
            <person name="Williams T.J."/>
            <person name="Burg D."/>
            <person name="Siddiqui K.S."/>
            <person name="De Francisci D."/>
            <person name="Chong K.W."/>
            <person name="Pilak O."/>
            <person name="Chew H.H."/>
            <person name="De Maere M.Z."/>
            <person name="Ting L."/>
            <person name="Katrib M."/>
            <person name="Ng C."/>
            <person name="Sowers K.R."/>
            <person name="Galperin M.Y."/>
            <person name="Anderson I.J."/>
            <person name="Ivanova N."/>
            <person name="Dalin E."/>
            <person name="Martinez M."/>
            <person name="Lapidus A."/>
            <person name="Hauser L."/>
            <person name="Land M."/>
            <person name="Thomas T."/>
            <person name="Cavicchioli R."/>
        </authorList>
    </citation>
    <scope>NUCLEOTIDE SEQUENCE [LARGE SCALE GENOMIC DNA]</scope>
    <source>
        <strain>DSM 6242 / NBRC 107633 / OCM 468 / ACE-M</strain>
    </source>
</reference>
<name>RF1_METBU</name>
<dbReference type="EMBL" id="CP000300">
    <property type="protein sequence ID" value="ABE52628.1"/>
    <property type="molecule type" value="Genomic_DNA"/>
</dbReference>
<dbReference type="RefSeq" id="WP_011499771.1">
    <property type="nucleotide sequence ID" value="NC_007955.1"/>
</dbReference>
<dbReference type="SMR" id="Q12V98"/>
<dbReference type="STRING" id="259564.Mbur_1738"/>
<dbReference type="GeneID" id="3997298"/>
<dbReference type="KEGG" id="mbu:Mbur_1738"/>
<dbReference type="HOGENOM" id="CLU_035759_3_0_2"/>
<dbReference type="OrthoDB" id="1011at2157"/>
<dbReference type="Proteomes" id="UP000001979">
    <property type="component" value="Chromosome"/>
</dbReference>
<dbReference type="GO" id="GO:0005737">
    <property type="term" value="C:cytoplasm"/>
    <property type="evidence" value="ECO:0007669"/>
    <property type="project" value="UniProtKB-SubCell"/>
</dbReference>
<dbReference type="GO" id="GO:0016149">
    <property type="term" value="F:translation release factor activity, codon specific"/>
    <property type="evidence" value="ECO:0007669"/>
    <property type="project" value="UniProtKB-UniRule"/>
</dbReference>
<dbReference type="FunFam" id="3.30.1330.30:FF:000032">
    <property type="entry name" value="Eukaryotic peptide chain release factor subunit 1"/>
    <property type="match status" value="1"/>
</dbReference>
<dbReference type="FunFam" id="3.30.420.60:FF:000003">
    <property type="entry name" value="Peptide chain release factor subunit 1"/>
    <property type="match status" value="1"/>
</dbReference>
<dbReference type="FunFam" id="3.30.960.10:FF:000003">
    <property type="entry name" value="Peptide chain release factor subunit 1"/>
    <property type="match status" value="1"/>
</dbReference>
<dbReference type="Gene3D" id="1.20.5.170">
    <property type="match status" value="1"/>
</dbReference>
<dbReference type="Gene3D" id="3.30.1330.30">
    <property type="match status" value="1"/>
</dbReference>
<dbReference type="Gene3D" id="3.30.960.10">
    <property type="entry name" value="eRF1 domain 1"/>
    <property type="match status" value="1"/>
</dbReference>
<dbReference type="Gene3D" id="3.30.420.60">
    <property type="entry name" value="eRF1 domain 2"/>
    <property type="match status" value="1"/>
</dbReference>
<dbReference type="HAMAP" id="MF_00424">
    <property type="entry name" value="Rel_fact_arch_1"/>
    <property type="match status" value="1"/>
</dbReference>
<dbReference type="InterPro" id="IPR042226">
    <property type="entry name" value="eFR1_2_sf"/>
</dbReference>
<dbReference type="InterPro" id="IPR005140">
    <property type="entry name" value="eRF1_1_Pelota"/>
</dbReference>
<dbReference type="InterPro" id="IPR024049">
    <property type="entry name" value="eRF1_1_sf"/>
</dbReference>
<dbReference type="InterPro" id="IPR005141">
    <property type="entry name" value="eRF1_2"/>
</dbReference>
<dbReference type="InterPro" id="IPR005142">
    <property type="entry name" value="eRF1_3"/>
</dbReference>
<dbReference type="InterPro" id="IPR020918">
    <property type="entry name" value="Peptide_chain-rel_aRF1"/>
</dbReference>
<dbReference type="InterPro" id="IPR004403">
    <property type="entry name" value="Peptide_chain-rel_eRF1/aRF1"/>
</dbReference>
<dbReference type="InterPro" id="IPR029064">
    <property type="entry name" value="Ribosomal_eL30-like_sf"/>
</dbReference>
<dbReference type="NCBIfam" id="TIGR03676">
    <property type="entry name" value="aRF1_eRF1"/>
    <property type="match status" value="1"/>
</dbReference>
<dbReference type="PANTHER" id="PTHR10113">
    <property type="entry name" value="PEPTIDE CHAIN RELEASE FACTOR SUBUNIT 1"/>
    <property type="match status" value="1"/>
</dbReference>
<dbReference type="Pfam" id="PF03463">
    <property type="entry name" value="eRF1_1"/>
    <property type="match status" value="1"/>
</dbReference>
<dbReference type="Pfam" id="PF03464">
    <property type="entry name" value="eRF1_2"/>
    <property type="match status" value="1"/>
</dbReference>
<dbReference type="Pfam" id="PF03465">
    <property type="entry name" value="eRF1_3"/>
    <property type="match status" value="1"/>
</dbReference>
<dbReference type="SMART" id="SM01194">
    <property type="entry name" value="eRF1_1"/>
    <property type="match status" value="1"/>
</dbReference>
<dbReference type="SUPFAM" id="SSF55315">
    <property type="entry name" value="L30e-like"/>
    <property type="match status" value="1"/>
</dbReference>
<dbReference type="SUPFAM" id="SSF55481">
    <property type="entry name" value="N-terminal domain of eukaryotic peptide chain release factor subunit 1, ERF1"/>
    <property type="match status" value="1"/>
</dbReference>
<dbReference type="SUPFAM" id="SSF53137">
    <property type="entry name" value="Translational machinery components"/>
    <property type="match status" value="1"/>
</dbReference>
<comment type="function">
    <text evidence="1">Directs the termination of nascent peptide synthesis (translation) in response to the termination codons UAA, UAG and UGA.</text>
</comment>
<comment type="subunit">
    <text evidence="1">Heterodimer of two subunits, one of which binds GTP.</text>
</comment>
<comment type="subcellular location">
    <subcellularLocation>
        <location evidence="1">Cytoplasm</location>
    </subcellularLocation>
</comment>
<comment type="similarity">
    <text evidence="1">Belongs to the eukaryotic release factor 1 family.</text>
</comment>
<accession>Q12V98</accession>
<organism>
    <name type="scientific">Methanococcoides burtonii (strain DSM 6242 / NBRC 107633 / OCM 468 / ACE-M)</name>
    <dbReference type="NCBI Taxonomy" id="259564"/>
    <lineage>
        <taxon>Archaea</taxon>
        <taxon>Methanobacteriati</taxon>
        <taxon>Methanobacteriota</taxon>
        <taxon>Stenosarchaea group</taxon>
        <taxon>Methanomicrobia</taxon>
        <taxon>Methanosarcinales</taxon>
        <taxon>Methanosarcinaceae</taxon>
        <taxon>Methanococcoides</taxon>
    </lineage>
</organism>
<sequence>MADQSSHQKYEFKKKLESLRGKKGRGTELISLYIPPDKQISDVVSQLRNEHSQASNIKSKLTKTNVQGAIDSIMSRLRYGTVPENGIVYFTGAVDVGANKTNMETTIVEPPQPIITYRYHCDSSFFLTPLEDMLKEAKTYGLLVLDRREATVGLLTGKQIEAFRNLTSTVPGKQRKGGQSAHRFQQLRLIAIHDFYKRIGDAASEVFLAVEQKDFEGVLIGGPSPTKEEFEAGNFFHHEIEKKVLDLFDVAYTDESGLSELVNAASERLEDLDLMVEKKLMQQFFRELVSDSGKATYGEDNVRENLIIGAVDILLISEDLRAVRETVKCTSCDYEQKTSREFKPGDSSSPTGNCPKCGSYLEITEKVDVVDQLSEICDQMGTRVEFISTDFEEGSQLLKAFGGVVAILRFNTGI</sequence>
<evidence type="ECO:0000255" key="1">
    <source>
        <dbReference type="HAMAP-Rule" id="MF_00424"/>
    </source>
</evidence>
<protein>
    <recommendedName>
        <fullName evidence="1">Peptide chain release factor subunit 1</fullName>
    </recommendedName>
    <alternativeName>
        <fullName evidence="1">Translation termination factor aRF1</fullName>
    </alternativeName>
</protein>
<proteinExistence type="inferred from homology"/>
<feature type="chain" id="PRO_1000060103" description="Peptide chain release factor subunit 1">
    <location>
        <begin position="1"/>
        <end position="414"/>
    </location>
</feature>
<keyword id="KW-0963">Cytoplasm</keyword>
<keyword id="KW-0648">Protein biosynthesis</keyword>
<gene>
    <name evidence="1" type="primary">prf1</name>
    <name type="ordered locus">Mbur_1738</name>
</gene>